<accession>Q06219</accession>
<accession>O08690</accession>
<evidence type="ECO:0000250" key="1"/>
<evidence type="ECO:0000250" key="2">
    <source>
        <dbReference type="UniProtKB" id="P43354"/>
    </source>
</evidence>
<evidence type="ECO:0000255" key="3">
    <source>
        <dbReference type="PROSITE-ProRule" id="PRU00407"/>
    </source>
</evidence>
<evidence type="ECO:0000255" key="4">
    <source>
        <dbReference type="PROSITE-ProRule" id="PRU01189"/>
    </source>
</evidence>
<evidence type="ECO:0000256" key="5">
    <source>
        <dbReference type="SAM" id="MobiDB-lite"/>
    </source>
</evidence>
<evidence type="ECO:0000269" key="6">
    <source>
    </source>
</evidence>
<evidence type="ECO:0000269" key="7">
    <source>
    </source>
</evidence>
<evidence type="ECO:0000305" key="8"/>
<protein>
    <recommendedName>
        <fullName>Nuclear receptor subfamily 4 group A member 2</fullName>
    </recommendedName>
    <alternativeName>
        <fullName>NUR-related factor 1</fullName>
    </alternativeName>
    <alternativeName>
        <fullName>Orphan nuclear receptor NURR1</fullName>
    </alternativeName>
</protein>
<name>NR4A2_MOUSE</name>
<organism>
    <name type="scientific">Mus musculus</name>
    <name type="common">Mouse</name>
    <dbReference type="NCBI Taxonomy" id="10090"/>
    <lineage>
        <taxon>Eukaryota</taxon>
        <taxon>Metazoa</taxon>
        <taxon>Chordata</taxon>
        <taxon>Craniata</taxon>
        <taxon>Vertebrata</taxon>
        <taxon>Euteleostomi</taxon>
        <taxon>Mammalia</taxon>
        <taxon>Eutheria</taxon>
        <taxon>Euarchontoglires</taxon>
        <taxon>Glires</taxon>
        <taxon>Rodentia</taxon>
        <taxon>Myomorpha</taxon>
        <taxon>Muroidea</taxon>
        <taxon>Muridae</taxon>
        <taxon>Murinae</taxon>
        <taxon>Mus</taxon>
        <taxon>Mus</taxon>
    </lineage>
</organism>
<gene>
    <name type="primary">Nr4a2</name>
    <name type="synonym">Nurr1</name>
</gene>
<proteinExistence type="evidence at protein level"/>
<comment type="function">
    <text evidence="6">Transcriptional regulator which is important for the differentiation and maintenance of meso-diencephalic dopaminergic (mdDA) neurons during development (PubMed:19144721). It is crucial for expression of a set of genes such as SLC6A3, SLC18A2, TH and DRD2 which are essential for development of mdDA neurons (PubMed:19144721).</text>
</comment>
<comment type="subunit">
    <text evidence="6 7">Interacts with SFPQ, NCOR2, SIN3A and HADC1. The interaction with NCOR2 increases in the absence of PITX3. Interacts with PER2.</text>
</comment>
<comment type="interaction">
    <interactant intactId="EBI-2337255">
        <id>Q06219</id>
    </interactant>
    <interactant intactId="EBI-2337309">
        <id>Q8CFE3</id>
        <label>Rcor1</label>
    </interactant>
    <organismsDiffer>false</organismsDiffer>
    <experiments>5</experiments>
</comment>
<comment type="interaction">
    <interactant intactId="EBI-2337255">
        <id>Q06219</id>
    </interactant>
    <interactant intactId="EBI-644400">
        <id>Q04207</id>
        <label>Rela</label>
    </interactant>
    <organismsDiffer>false</organismsDiffer>
    <experiments>2</experiments>
</comment>
<comment type="subcellular location">
    <subcellularLocation>
        <location evidence="2">Cytoplasm</location>
    </subcellularLocation>
    <subcellularLocation>
        <location evidence="2">Nucleus</location>
    </subcellularLocation>
    <text evidence="2">Mostly nuclear; oxidative stress promotes cytoplasmic localization.</text>
</comment>
<comment type="alternative products">
    <event type="alternative splicing"/>
    <isoform>
        <id>Q06219-1</id>
        <name>NURR1</name>
        <sequence type="displayed"/>
    </isoform>
    <isoform>
        <id>Q06219-2</id>
        <name>NURR1A</name>
        <sequence type="described" ref="VSP_003710 VSP_003711"/>
    </isoform>
</comment>
<comment type="tissue specificity">
    <text>Brain.</text>
</comment>
<comment type="developmental stage">
    <text>Expression begins in the embryo, increases in neonates and decreases in the adult.</text>
</comment>
<comment type="domain">
    <text evidence="1">The ligand-binding domain (LBD) contains no cavity as a result of the tight packing of side chains from several bulky hydrophobic residues in the region normally occupied by ligands. NR4A2 lacks a 'classical' binding site for coactivators (By similarity).</text>
</comment>
<comment type="similarity">
    <text evidence="8">Belongs to the nuclear hormone receptor family. NR4 subfamily.</text>
</comment>
<reference key="1">
    <citation type="journal article" date="1992" name="Mol. Endocrinol.">
        <title>Identification of a new brain-specific transcription factor, NURR1.</title>
        <authorList>
            <person name="Law S.W."/>
            <person name="Conneely O.M."/>
            <person name="DeMayo F.J."/>
            <person name="O'Malley B.W."/>
        </authorList>
    </citation>
    <scope>NUCLEOTIDE SEQUENCE [MRNA] (ISOFORM NURR1)</scope>
    <source>
        <tissue>Brain</tissue>
    </source>
</reference>
<reference key="2">
    <citation type="journal article" date="1997" name="Genomics">
        <title>Organization, sequence, chromosomal localization, and promoter identification of the mouse orphan nuclear receptor Nurr1 gene.</title>
        <authorList>
            <person name="Castillo S.O."/>
            <person name="Xiao Q."/>
            <person name="Lyu M.S."/>
            <person name="Kozak C.A."/>
            <person name="Nikodem V.M."/>
        </authorList>
    </citation>
    <scope>NUCLEOTIDE SEQUENCE [GENOMIC DNA]</scope>
    <source>
        <strain>129/SvJ</strain>
    </source>
</reference>
<reference key="3">
    <citation type="journal article" date="2009" name="Development">
        <title>Pitx3 potentiates Nurr1 in dopamine neuron terminal differentiation through release of SMRT-mediated repression.</title>
        <authorList>
            <person name="Jacobs F.M."/>
            <person name="van Erp S."/>
            <person name="van der Linden A.J."/>
            <person name="von Oerthel L."/>
            <person name="Burbach J.P."/>
            <person name="Smidt M.P."/>
        </authorList>
    </citation>
    <scope>FUNCTION</scope>
    <scope>INTERACTION WITH SFPQ; NCOR2; SIN3A AND HDAC1</scope>
</reference>
<reference key="4">
    <citation type="journal article" date="2010" name="Genes Dev.">
        <title>The mammalian clock component PERIOD2 coordinates circadian output by interaction with nuclear receptors.</title>
        <authorList>
            <person name="Schmutz I."/>
            <person name="Ripperger J.A."/>
            <person name="Baeriswyl-Aebischer S."/>
            <person name="Albrecht U."/>
        </authorList>
    </citation>
    <scope>INTERACTION WITH PER2</scope>
</reference>
<dbReference type="EMBL" id="S53744">
    <property type="protein sequence ID" value="AAB25138.1"/>
    <property type="molecule type" value="mRNA"/>
</dbReference>
<dbReference type="EMBL" id="U86783">
    <property type="protein sequence ID" value="AAC53153.1"/>
    <property type="molecule type" value="Genomic_DNA"/>
</dbReference>
<dbReference type="EMBL" id="U86783">
    <property type="protein sequence ID" value="AAC53154.1"/>
    <property type="molecule type" value="Genomic_DNA"/>
</dbReference>
<dbReference type="CCDS" id="CCDS16043.1">
    <molecule id="Q06219-1"/>
</dbReference>
<dbReference type="PIR" id="A46225">
    <property type="entry name" value="A46225"/>
</dbReference>
<dbReference type="RefSeq" id="NP_001132981.1">
    <molecule id="Q06219-1"/>
    <property type="nucleotide sequence ID" value="NM_001139509.2"/>
</dbReference>
<dbReference type="RefSeq" id="NP_001407409.1">
    <molecule id="Q06219-1"/>
    <property type="nucleotide sequence ID" value="NM_001420480.1"/>
</dbReference>
<dbReference type="RefSeq" id="NP_038641.1">
    <molecule id="Q06219-1"/>
    <property type="nucleotide sequence ID" value="NM_013613.3"/>
</dbReference>
<dbReference type="RefSeq" id="XP_011237335.1">
    <molecule id="Q06219-1"/>
    <property type="nucleotide sequence ID" value="XM_011239033.4"/>
</dbReference>
<dbReference type="RefSeq" id="XP_011237336.1">
    <property type="nucleotide sequence ID" value="XM_011239034.2"/>
</dbReference>
<dbReference type="RefSeq" id="XP_036015279.1">
    <molecule id="Q06219-1"/>
    <property type="nucleotide sequence ID" value="XM_036159386.1"/>
</dbReference>
<dbReference type="BMRB" id="Q06219"/>
<dbReference type="SMR" id="Q06219"/>
<dbReference type="BioGRID" id="201880">
    <property type="interactions" value="5"/>
</dbReference>
<dbReference type="CORUM" id="Q06219"/>
<dbReference type="FunCoup" id="Q06219">
    <property type="interactions" value="1664"/>
</dbReference>
<dbReference type="IntAct" id="Q06219">
    <property type="interactions" value="5"/>
</dbReference>
<dbReference type="STRING" id="10090.ENSMUSP00000028166"/>
<dbReference type="BindingDB" id="Q06219"/>
<dbReference type="ChEMBL" id="CHEMBL3879839"/>
<dbReference type="GlyGen" id="Q06219">
    <property type="glycosylation" value="2 sites"/>
</dbReference>
<dbReference type="iPTMnet" id="Q06219"/>
<dbReference type="PhosphoSitePlus" id="Q06219"/>
<dbReference type="PaxDb" id="10090-ENSMUSP00000028166"/>
<dbReference type="ProteomicsDB" id="293968">
    <molecule id="Q06219-1"/>
</dbReference>
<dbReference type="ProteomicsDB" id="293969">
    <molecule id="Q06219-2"/>
</dbReference>
<dbReference type="Antibodypedia" id="621">
    <property type="antibodies" value="432 antibodies from 40 providers"/>
</dbReference>
<dbReference type="DNASU" id="18227"/>
<dbReference type="Ensembl" id="ENSMUST00000028166.9">
    <molecule id="Q06219-1"/>
    <property type="protein sequence ID" value="ENSMUSP00000028166.3"/>
    <property type="gene ID" value="ENSMUSG00000026826.14"/>
</dbReference>
<dbReference type="Ensembl" id="ENSMUST00000112629.8">
    <molecule id="Q06219-1"/>
    <property type="protein sequence ID" value="ENSMUSP00000108248.2"/>
    <property type="gene ID" value="ENSMUSG00000026826.14"/>
</dbReference>
<dbReference type="GeneID" id="18227"/>
<dbReference type="KEGG" id="mmu:18227"/>
<dbReference type="UCSC" id="uc008jrw.2">
    <molecule id="Q06219-1"/>
    <property type="organism name" value="mouse"/>
</dbReference>
<dbReference type="UCSC" id="uc012bvn.1">
    <molecule id="Q06219-2"/>
    <property type="organism name" value="mouse"/>
</dbReference>
<dbReference type="AGR" id="MGI:1352456"/>
<dbReference type="CTD" id="4929"/>
<dbReference type="MGI" id="MGI:1352456">
    <property type="gene designation" value="Nr4a2"/>
</dbReference>
<dbReference type="VEuPathDB" id="HostDB:ENSMUSG00000026826"/>
<dbReference type="eggNOG" id="KOG4217">
    <property type="taxonomic scope" value="Eukaryota"/>
</dbReference>
<dbReference type="GeneTree" id="ENSGT00950000183038"/>
<dbReference type="InParanoid" id="Q06219"/>
<dbReference type="OMA" id="EDIPMHN"/>
<dbReference type="OrthoDB" id="5952118at2759"/>
<dbReference type="PhylomeDB" id="Q06219"/>
<dbReference type="TreeFam" id="TF315430"/>
<dbReference type="Reactome" id="R-MMU-383280">
    <property type="pathway name" value="Nuclear Receptor transcription pathway"/>
</dbReference>
<dbReference type="BioGRID-ORCS" id="18227">
    <property type="hits" value="3 hits in 80 CRISPR screens"/>
</dbReference>
<dbReference type="ChiTaRS" id="Nr4a2">
    <property type="organism name" value="mouse"/>
</dbReference>
<dbReference type="PRO" id="PR:Q06219"/>
<dbReference type="Proteomes" id="UP000000589">
    <property type="component" value="Chromosome 2"/>
</dbReference>
<dbReference type="RNAct" id="Q06219">
    <property type="molecule type" value="protein"/>
</dbReference>
<dbReference type="Bgee" id="ENSMUSG00000026826">
    <property type="expression patterns" value="Expressed in habenula and 244 other cell types or tissues"/>
</dbReference>
<dbReference type="ExpressionAtlas" id="Q06219">
    <property type="expression patterns" value="baseline and differential"/>
</dbReference>
<dbReference type="GO" id="GO:0005737">
    <property type="term" value="C:cytoplasm"/>
    <property type="evidence" value="ECO:0007669"/>
    <property type="project" value="UniProtKB-SubCell"/>
</dbReference>
<dbReference type="GO" id="GO:0016607">
    <property type="term" value="C:nuclear speck"/>
    <property type="evidence" value="ECO:0007669"/>
    <property type="project" value="Ensembl"/>
</dbReference>
<dbReference type="GO" id="GO:0005654">
    <property type="term" value="C:nucleoplasm"/>
    <property type="evidence" value="ECO:0000304"/>
    <property type="project" value="Reactome"/>
</dbReference>
<dbReference type="GO" id="GO:0005634">
    <property type="term" value="C:nucleus"/>
    <property type="evidence" value="ECO:0000314"/>
    <property type="project" value="MGI"/>
</dbReference>
<dbReference type="GO" id="GO:0003677">
    <property type="term" value="F:DNA binding"/>
    <property type="evidence" value="ECO:0000314"/>
    <property type="project" value="MGI"/>
</dbReference>
<dbReference type="GO" id="GO:0001228">
    <property type="term" value="F:DNA-binding transcription activator activity, RNA polymerase II-specific"/>
    <property type="evidence" value="ECO:0000314"/>
    <property type="project" value="UniProtKB"/>
</dbReference>
<dbReference type="GO" id="GO:0035259">
    <property type="term" value="F:nuclear glucocorticoid receptor binding"/>
    <property type="evidence" value="ECO:0000353"/>
    <property type="project" value="UniProtKB"/>
</dbReference>
<dbReference type="GO" id="GO:0004879">
    <property type="term" value="F:nuclear receptor activity"/>
    <property type="evidence" value="ECO:0000304"/>
    <property type="project" value="MGI"/>
</dbReference>
<dbReference type="GO" id="GO:0046982">
    <property type="term" value="F:protein heterodimerization activity"/>
    <property type="evidence" value="ECO:0000314"/>
    <property type="project" value="UniProtKB"/>
</dbReference>
<dbReference type="GO" id="GO:0000978">
    <property type="term" value="F:RNA polymerase II cis-regulatory region sequence-specific DNA binding"/>
    <property type="evidence" value="ECO:0000314"/>
    <property type="project" value="MGI"/>
</dbReference>
<dbReference type="GO" id="GO:0000977">
    <property type="term" value="F:RNA polymerase II transcription regulatory region sequence-specific DNA binding"/>
    <property type="evidence" value="ECO:0000315"/>
    <property type="project" value="NTNU_SB"/>
</dbReference>
<dbReference type="GO" id="GO:0043565">
    <property type="term" value="F:sequence-specific DNA binding"/>
    <property type="evidence" value="ECO:0000314"/>
    <property type="project" value="MGI"/>
</dbReference>
<dbReference type="GO" id="GO:0008270">
    <property type="term" value="F:zinc ion binding"/>
    <property type="evidence" value="ECO:0007669"/>
    <property type="project" value="UniProtKB-KW"/>
</dbReference>
<dbReference type="GO" id="GO:0008344">
    <property type="term" value="P:adult locomotory behavior"/>
    <property type="evidence" value="ECO:0000315"/>
    <property type="project" value="MGI"/>
</dbReference>
<dbReference type="GO" id="GO:0071376">
    <property type="term" value="P:cellular response to corticotropin-releasing hormone stimulus"/>
    <property type="evidence" value="ECO:0000314"/>
    <property type="project" value="UniProtKB"/>
</dbReference>
<dbReference type="GO" id="GO:0034599">
    <property type="term" value="P:cellular response to oxidative stress"/>
    <property type="evidence" value="ECO:0000315"/>
    <property type="project" value="MGI"/>
</dbReference>
<dbReference type="GO" id="GO:0021953">
    <property type="term" value="P:central nervous system neuron differentiation"/>
    <property type="evidence" value="ECO:0000315"/>
    <property type="project" value="MGI"/>
</dbReference>
<dbReference type="GO" id="GO:0021952">
    <property type="term" value="P:central nervous system projection neuron axonogenesis"/>
    <property type="evidence" value="ECO:0000315"/>
    <property type="project" value="MGI"/>
</dbReference>
<dbReference type="GO" id="GO:0006351">
    <property type="term" value="P:DNA-templated transcription"/>
    <property type="evidence" value="ECO:0000314"/>
    <property type="project" value="UniProtKB"/>
</dbReference>
<dbReference type="GO" id="GO:0042416">
    <property type="term" value="P:dopamine biosynthetic process"/>
    <property type="evidence" value="ECO:0000315"/>
    <property type="project" value="MGI"/>
</dbReference>
<dbReference type="GO" id="GO:0042417">
    <property type="term" value="P:dopamine metabolic process"/>
    <property type="evidence" value="ECO:0000315"/>
    <property type="project" value="MGI"/>
</dbReference>
<dbReference type="GO" id="GO:0071542">
    <property type="term" value="P:dopaminergic neuron differentiation"/>
    <property type="evidence" value="ECO:0000314"/>
    <property type="project" value="UniProtKB"/>
</dbReference>
<dbReference type="GO" id="GO:0045444">
    <property type="term" value="P:fat cell differentiation"/>
    <property type="evidence" value="ECO:0000314"/>
    <property type="project" value="UniProtKB"/>
</dbReference>
<dbReference type="GO" id="GO:0010467">
    <property type="term" value="P:gene expression"/>
    <property type="evidence" value="ECO:0000315"/>
    <property type="project" value="MGI"/>
</dbReference>
<dbReference type="GO" id="GO:0051866">
    <property type="term" value="P:general adaptation syndrome"/>
    <property type="evidence" value="ECO:0000315"/>
    <property type="project" value="MGI"/>
</dbReference>
<dbReference type="GO" id="GO:0021986">
    <property type="term" value="P:habenula development"/>
    <property type="evidence" value="ECO:0000315"/>
    <property type="project" value="MGI"/>
</dbReference>
<dbReference type="GO" id="GO:2001234">
    <property type="term" value="P:negative regulation of apoptotic signaling pathway"/>
    <property type="evidence" value="ECO:0007669"/>
    <property type="project" value="Ensembl"/>
</dbReference>
<dbReference type="GO" id="GO:0043524">
    <property type="term" value="P:negative regulation of neuron apoptotic process"/>
    <property type="evidence" value="ECO:0000315"/>
    <property type="project" value="MGI"/>
</dbReference>
<dbReference type="GO" id="GO:0000122">
    <property type="term" value="P:negative regulation of transcription by RNA polymerase II"/>
    <property type="evidence" value="ECO:0007669"/>
    <property type="project" value="Ensembl"/>
</dbReference>
<dbReference type="GO" id="GO:0007399">
    <property type="term" value="P:nervous system development"/>
    <property type="evidence" value="ECO:0000315"/>
    <property type="project" value="MGI"/>
</dbReference>
<dbReference type="GO" id="GO:0051402">
    <property type="term" value="P:neuron apoptotic process"/>
    <property type="evidence" value="ECO:0000315"/>
    <property type="project" value="MGI"/>
</dbReference>
<dbReference type="GO" id="GO:0042551">
    <property type="term" value="P:neuron maturation"/>
    <property type="evidence" value="ECO:0000315"/>
    <property type="project" value="MGI"/>
</dbReference>
<dbReference type="GO" id="GO:0001764">
    <property type="term" value="P:neuron migration"/>
    <property type="evidence" value="ECO:0000315"/>
    <property type="project" value="MGI"/>
</dbReference>
<dbReference type="GO" id="GO:0045893">
    <property type="term" value="P:positive regulation of DNA-templated transcription"/>
    <property type="evidence" value="ECO:0000314"/>
    <property type="project" value="MGI"/>
</dbReference>
<dbReference type="GO" id="GO:0045944">
    <property type="term" value="P:positive regulation of transcription by RNA polymerase II"/>
    <property type="evidence" value="ECO:0000314"/>
    <property type="project" value="UniProtKB"/>
</dbReference>
<dbReference type="GO" id="GO:0009791">
    <property type="term" value="P:post-embryonic development"/>
    <property type="evidence" value="ECO:0000315"/>
    <property type="project" value="MGI"/>
</dbReference>
<dbReference type="GO" id="GO:0006355">
    <property type="term" value="P:regulation of DNA-templated transcription"/>
    <property type="evidence" value="ECO:0000315"/>
    <property type="project" value="MGI"/>
</dbReference>
<dbReference type="GO" id="GO:0042053">
    <property type="term" value="P:regulation of dopamine metabolic process"/>
    <property type="evidence" value="ECO:0000314"/>
    <property type="project" value="MGI"/>
</dbReference>
<dbReference type="GO" id="GO:0010468">
    <property type="term" value="P:regulation of gene expression"/>
    <property type="evidence" value="ECO:0000315"/>
    <property type="project" value="MGI"/>
</dbReference>
<dbReference type="GO" id="GO:0043576">
    <property type="term" value="P:regulation of respiratory gaseous exchange"/>
    <property type="evidence" value="ECO:0000315"/>
    <property type="project" value="MGI"/>
</dbReference>
<dbReference type="GO" id="GO:0001975">
    <property type="term" value="P:response to amphetamine"/>
    <property type="evidence" value="ECO:0000315"/>
    <property type="project" value="MGI"/>
</dbReference>
<dbReference type="GO" id="GO:0001666">
    <property type="term" value="P:response to hypoxia"/>
    <property type="evidence" value="ECO:0000315"/>
    <property type="project" value="MGI"/>
</dbReference>
<dbReference type="GO" id="GO:0017085">
    <property type="term" value="P:response to insecticide"/>
    <property type="evidence" value="ECO:0000266"/>
    <property type="project" value="MGI"/>
</dbReference>
<dbReference type="GO" id="GO:0006366">
    <property type="term" value="P:transcription by RNA polymerase II"/>
    <property type="evidence" value="ECO:0000315"/>
    <property type="project" value="MGI"/>
</dbReference>
<dbReference type="CDD" id="cd06969">
    <property type="entry name" value="NR_DBD_NGFI-B"/>
    <property type="match status" value="1"/>
</dbReference>
<dbReference type="CDD" id="cd07071">
    <property type="entry name" value="NR_LBD_Nurr1"/>
    <property type="match status" value="1"/>
</dbReference>
<dbReference type="FunFam" id="1.10.565.10:FF:000008">
    <property type="entry name" value="Nuclear receptor subfamily 4 group A member 1"/>
    <property type="match status" value="1"/>
</dbReference>
<dbReference type="FunFam" id="3.30.50.10:FF:000009">
    <property type="entry name" value="nuclear receptor subfamily 4 group A member 2"/>
    <property type="match status" value="1"/>
</dbReference>
<dbReference type="Gene3D" id="3.30.50.10">
    <property type="entry name" value="Erythroid Transcription Factor GATA-1, subunit A"/>
    <property type="match status" value="1"/>
</dbReference>
<dbReference type="Gene3D" id="1.10.565.10">
    <property type="entry name" value="Retinoid X Receptor"/>
    <property type="match status" value="1"/>
</dbReference>
<dbReference type="InterPro" id="IPR035500">
    <property type="entry name" value="NHR-like_dom_sf"/>
</dbReference>
<dbReference type="InterPro" id="IPR003070">
    <property type="entry name" value="NR4A1-3"/>
</dbReference>
<dbReference type="InterPro" id="IPR003073">
    <property type="entry name" value="NR4A2"/>
</dbReference>
<dbReference type="InterPro" id="IPR000536">
    <property type="entry name" value="Nucl_hrmn_rcpt_lig-bd"/>
</dbReference>
<dbReference type="InterPro" id="IPR001723">
    <property type="entry name" value="Nuclear_hrmn_rcpt"/>
</dbReference>
<dbReference type="InterPro" id="IPR001628">
    <property type="entry name" value="Znf_hrmn_rcpt"/>
</dbReference>
<dbReference type="InterPro" id="IPR013088">
    <property type="entry name" value="Znf_NHR/GATA"/>
</dbReference>
<dbReference type="PANTHER" id="PTHR24085">
    <property type="entry name" value="NUCLEAR HORMONE RECEPTOR"/>
    <property type="match status" value="1"/>
</dbReference>
<dbReference type="PANTHER" id="PTHR24085:SF0">
    <property type="entry name" value="NUCLEAR RECEPTOR SUBFAMILY 4 GROUP A MEMBER 2"/>
    <property type="match status" value="1"/>
</dbReference>
<dbReference type="Pfam" id="PF00104">
    <property type="entry name" value="Hormone_recep"/>
    <property type="match status" value="1"/>
</dbReference>
<dbReference type="Pfam" id="PF00105">
    <property type="entry name" value="zf-C4"/>
    <property type="match status" value="1"/>
</dbReference>
<dbReference type="PRINTS" id="PR01284">
    <property type="entry name" value="NUCLEARECPTR"/>
</dbReference>
<dbReference type="PRINTS" id="PR01287">
    <property type="entry name" value="NURRNUCRCPTR"/>
</dbReference>
<dbReference type="PRINTS" id="PR00398">
    <property type="entry name" value="STRDHORMONER"/>
</dbReference>
<dbReference type="PRINTS" id="PR00047">
    <property type="entry name" value="STROIDFINGER"/>
</dbReference>
<dbReference type="SMART" id="SM00430">
    <property type="entry name" value="HOLI"/>
    <property type="match status" value="1"/>
</dbReference>
<dbReference type="SMART" id="SM00399">
    <property type="entry name" value="ZnF_C4"/>
    <property type="match status" value="1"/>
</dbReference>
<dbReference type="SUPFAM" id="SSF57716">
    <property type="entry name" value="Glucocorticoid receptor-like (DNA-binding domain)"/>
    <property type="match status" value="1"/>
</dbReference>
<dbReference type="SUPFAM" id="SSF48508">
    <property type="entry name" value="Nuclear receptor ligand-binding domain"/>
    <property type="match status" value="1"/>
</dbReference>
<dbReference type="PROSITE" id="PS51843">
    <property type="entry name" value="NR_LBD"/>
    <property type="match status" value="1"/>
</dbReference>
<dbReference type="PROSITE" id="PS00031">
    <property type="entry name" value="NUCLEAR_REC_DBD_1"/>
    <property type="match status" value="1"/>
</dbReference>
<dbReference type="PROSITE" id="PS51030">
    <property type="entry name" value="NUCLEAR_REC_DBD_2"/>
    <property type="match status" value="1"/>
</dbReference>
<feature type="chain" id="PRO_0000053719" description="Nuclear receptor subfamily 4 group A member 2">
    <location>
        <begin position="1"/>
        <end position="598"/>
    </location>
</feature>
<feature type="domain" description="NR LBD" evidence="4">
    <location>
        <begin position="360"/>
        <end position="595"/>
    </location>
</feature>
<feature type="DNA-binding region" description="Nuclear receptor" evidence="3">
    <location>
        <begin position="260"/>
        <end position="335"/>
    </location>
</feature>
<feature type="zinc finger region" description="NR C4-type" evidence="3">
    <location>
        <begin position="263"/>
        <end position="283"/>
    </location>
</feature>
<feature type="zinc finger region" description="NR C4-type" evidence="3">
    <location>
        <begin position="299"/>
        <end position="323"/>
    </location>
</feature>
<feature type="region of interest" description="Disordered" evidence="5">
    <location>
        <begin position="1"/>
        <end position="22"/>
    </location>
</feature>
<feature type="region of interest" description="Disordered" evidence="5">
    <location>
        <begin position="337"/>
        <end position="361"/>
    </location>
</feature>
<feature type="short sequence motif" description="Bipartite nuclear localization signal (NLS1)" evidence="1">
    <location>
        <begin position="287"/>
        <end position="314"/>
    </location>
</feature>
<feature type="short sequence motif" description="Nuclear localization signal (NLS1)" evidence="1">
    <location>
        <begin position="338"/>
        <end position="350"/>
    </location>
</feature>
<feature type="short sequence motif" description="nuclear export sequence (NES1)" evidence="1">
    <location>
        <begin position="443"/>
        <end position="452"/>
    </location>
</feature>
<feature type="short sequence motif" description="nuclear export sequence (NES2)" evidence="1">
    <location>
        <begin position="568"/>
        <end position="577"/>
    </location>
</feature>
<feature type="compositionally biased region" description="Low complexity" evidence="5">
    <location>
        <begin position="8"/>
        <end position="22"/>
    </location>
</feature>
<feature type="compositionally biased region" description="Pro residues" evidence="5">
    <location>
        <begin position="352"/>
        <end position="361"/>
    </location>
</feature>
<feature type="splice variant" id="VSP_003710" description="In isoform NURR1A." evidence="8">
    <original>S</original>
    <variation>I</variation>
    <location>
        <position position="455"/>
    </location>
</feature>
<feature type="splice variant" id="VSP_003711" description="In isoform NURR1A." evidence="8">
    <location>
        <begin position="456"/>
        <end position="598"/>
    </location>
</feature>
<sequence>MPCVQAQYGSSPQGASPASQSYSYHSSGEYSSDFLTPEFVKFSMDLTNTEITATTSLPSFSTFMDNYSTGYDVKPPCLYQMPLSGQQSSIKVEDIQMHNYQQHSHLPPQSEEMMPHSGSVYYKPSSPPTPSTPSFQVQHSPMWDDPGSLHNFHQNYVATTHMIEQRKTPVSRLSLFSFKQSPPGTPVSSCQMRFDGPLHVPMNPEPAGSHHVVDGQTFAVPNPIRKPASMGFPGLQIGHASQLLDTQVPSPPSRGSPSNEGLCAVCGDNAACQHYGVRTCEGCKGFFKRTVQKNAKYVCLANKNCPVDKRRRNRCQYCRFQKCLAVGMVKEVVRTDSLKGRRGRLPSKPKSPQDPSPPSPPVSLISALVRAHVDSNPAMTSLDYSRFQANPDYQMSGDDTQHIQQFYDLLTGSMEIIRGWAEKIPGFADLPKADQDLLFESAFLELFVLRLAYRSNPVEGKLIFCNGVVLHRLQCVRGFGEWIDSIVEFSSNLQNMNIDISAFSCIAALAMVTERHGLKEPKRVEELQNKIVNCLKDHVTFNNGGLNRPNYLSKLLGKLPELRTLCTQGLQRIFYLKLEDLVPPPAIIDKLFLDTLPF</sequence>
<keyword id="KW-0025">Alternative splicing</keyword>
<keyword id="KW-0963">Cytoplasm</keyword>
<keyword id="KW-0238">DNA-binding</keyword>
<keyword id="KW-0479">Metal-binding</keyword>
<keyword id="KW-0539">Nucleus</keyword>
<keyword id="KW-0675">Receptor</keyword>
<keyword id="KW-1185">Reference proteome</keyword>
<keyword id="KW-0804">Transcription</keyword>
<keyword id="KW-0805">Transcription regulation</keyword>
<keyword id="KW-0862">Zinc</keyword>
<keyword id="KW-0863">Zinc-finger</keyword>